<evidence type="ECO:0000255" key="1">
    <source>
        <dbReference type="HAMAP-Rule" id="MF_00151"/>
    </source>
</evidence>
<protein>
    <recommendedName>
        <fullName evidence="1">Phosphopantetheine adenylyltransferase</fullName>
        <ecNumber evidence="1">2.7.7.3</ecNumber>
    </recommendedName>
    <alternativeName>
        <fullName evidence="1">Dephospho-CoA pyrophosphorylase</fullName>
    </alternativeName>
    <alternativeName>
        <fullName evidence="1">Pantetheine-phosphate adenylyltransferase</fullName>
        <shortName evidence="1">PPAT</shortName>
    </alternativeName>
</protein>
<organism>
    <name type="scientific">Streptococcus pyogenes serotype M5 (strain Manfredo)</name>
    <dbReference type="NCBI Taxonomy" id="160491"/>
    <lineage>
        <taxon>Bacteria</taxon>
        <taxon>Bacillati</taxon>
        <taxon>Bacillota</taxon>
        <taxon>Bacilli</taxon>
        <taxon>Lactobacillales</taxon>
        <taxon>Streptococcaceae</taxon>
        <taxon>Streptococcus</taxon>
    </lineage>
</organism>
<proteinExistence type="inferred from homology"/>
<gene>
    <name evidence="1" type="primary">coaD</name>
    <name type="ordered locus">SpyM50586</name>
</gene>
<keyword id="KW-0067">ATP-binding</keyword>
<keyword id="KW-0173">Coenzyme A biosynthesis</keyword>
<keyword id="KW-0963">Cytoplasm</keyword>
<keyword id="KW-0460">Magnesium</keyword>
<keyword id="KW-0547">Nucleotide-binding</keyword>
<keyword id="KW-0548">Nucleotidyltransferase</keyword>
<keyword id="KW-0808">Transferase</keyword>
<accession>A2RDJ7</accession>
<feature type="chain" id="PRO_1000011255" description="Phosphopantetheine adenylyltransferase">
    <location>
        <begin position="1"/>
        <end position="163"/>
    </location>
</feature>
<feature type="binding site" evidence="1">
    <location>
        <begin position="11"/>
        <end position="12"/>
    </location>
    <ligand>
        <name>ATP</name>
        <dbReference type="ChEBI" id="CHEBI:30616"/>
    </ligand>
</feature>
<feature type="binding site" evidence="1">
    <location>
        <position position="11"/>
    </location>
    <ligand>
        <name>substrate</name>
    </ligand>
</feature>
<feature type="binding site" evidence="1">
    <location>
        <position position="19"/>
    </location>
    <ligand>
        <name>ATP</name>
        <dbReference type="ChEBI" id="CHEBI:30616"/>
    </ligand>
</feature>
<feature type="binding site" evidence="1">
    <location>
        <position position="43"/>
    </location>
    <ligand>
        <name>substrate</name>
    </ligand>
</feature>
<feature type="binding site" evidence="1">
    <location>
        <position position="76"/>
    </location>
    <ligand>
        <name>substrate</name>
    </ligand>
</feature>
<feature type="binding site" evidence="1">
    <location>
        <position position="90"/>
    </location>
    <ligand>
        <name>substrate</name>
    </ligand>
</feature>
<feature type="binding site" evidence="1">
    <location>
        <begin position="91"/>
        <end position="93"/>
    </location>
    <ligand>
        <name>ATP</name>
        <dbReference type="ChEBI" id="CHEBI:30616"/>
    </ligand>
</feature>
<feature type="binding site" evidence="1">
    <location>
        <position position="101"/>
    </location>
    <ligand>
        <name>ATP</name>
        <dbReference type="ChEBI" id="CHEBI:30616"/>
    </ligand>
</feature>
<feature type="binding site" evidence="1">
    <location>
        <begin position="126"/>
        <end position="132"/>
    </location>
    <ligand>
        <name>ATP</name>
        <dbReference type="ChEBI" id="CHEBI:30616"/>
    </ligand>
</feature>
<feature type="site" description="Transition state stabilizer" evidence="1">
    <location>
        <position position="19"/>
    </location>
</feature>
<sequence length="163" mass="18629">MLTKIGLYTGSFDPVTNGHLDIVKRASGLFDQIYVGIFDNPTKKSYFKLEVRKAMLTQALADFTNVIVVTSHERLAIDVAKELRVTHLIRGLRNATDFEYEENLEYFNHLLAPNIETVYLISRNKWQALSSSRVRELIHFQSSLEGLVPQSVIAQVEKMNEKT</sequence>
<dbReference type="EC" id="2.7.7.3" evidence="1"/>
<dbReference type="EMBL" id="AM295007">
    <property type="protein sequence ID" value="CAM29922.1"/>
    <property type="molecule type" value="Genomic_DNA"/>
</dbReference>
<dbReference type="RefSeq" id="WP_002983821.1">
    <property type="nucleotide sequence ID" value="NC_009332.1"/>
</dbReference>
<dbReference type="SMR" id="A2RDJ7"/>
<dbReference type="GeneID" id="69900575"/>
<dbReference type="KEGG" id="spf:SpyM50586"/>
<dbReference type="HOGENOM" id="CLU_100149_0_1_9"/>
<dbReference type="UniPathway" id="UPA00241">
    <property type="reaction ID" value="UER00355"/>
</dbReference>
<dbReference type="GO" id="GO:0005737">
    <property type="term" value="C:cytoplasm"/>
    <property type="evidence" value="ECO:0007669"/>
    <property type="project" value="UniProtKB-SubCell"/>
</dbReference>
<dbReference type="GO" id="GO:0005524">
    <property type="term" value="F:ATP binding"/>
    <property type="evidence" value="ECO:0007669"/>
    <property type="project" value="UniProtKB-KW"/>
</dbReference>
<dbReference type="GO" id="GO:0004595">
    <property type="term" value="F:pantetheine-phosphate adenylyltransferase activity"/>
    <property type="evidence" value="ECO:0007669"/>
    <property type="project" value="UniProtKB-UniRule"/>
</dbReference>
<dbReference type="GO" id="GO:0015937">
    <property type="term" value="P:coenzyme A biosynthetic process"/>
    <property type="evidence" value="ECO:0007669"/>
    <property type="project" value="UniProtKB-UniRule"/>
</dbReference>
<dbReference type="CDD" id="cd02163">
    <property type="entry name" value="PPAT"/>
    <property type="match status" value="1"/>
</dbReference>
<dbReference type="Gene3D" id="3.40.50.620">
    <property type="entry name" value="HUPs"/>
    <property type="match status" value="1"/>
</dbReference>
<dbReference type="HAMAP" id="MF_00151">
    <property type="entry name" value="PPAT_bact"/>
    <property type="match status" value="1"/>
</dbReference>
<dbReference type="InterPro" id="IPR004821">
    <property type="entry name" value="Cyt_trans-like"/>
</dbReference>
<dbReference type="InterPro" id="IPR001980">
    <property type="entry name" value="PPAT"/>
</dbReference>
<dbReference type="InterPro" id="IPR014729">
    <property type="entry name" value="Rossmann-like_a/b/a_fold"/>
</dbReference>
<dbReference type="NCBIfam" id="TIGR01510">
    <property type="entry name" value="coaD_prev_kdtB"/>
    <property type="match status" value="1"/>
</dbReference>
<dbReference type="NCBIfam" id="TIGR00125">
    <property type="entry name" value="cyt_tran_rel"/>
    <property type="match status" value="1"/>
</dbReference>
<dbReference type="PANTHER" id="PTHR21342">
    <property type="entry name" value="PHOSPHOPANTETHEINE ADENYLYLTRANSFERASE"/>
    <property type="match status" value="1"/>
</dbReference>
<dbReference type="PANTHER" id="PTHR21342:SF1">
    <property type="entry name" value="PHOSPHOPANTETHEINE ADENYLYLTRANSFERASE"/>
    <property type="match status" value="1"/>
</dbReference>
<dbReference type="Pfam" id="PF01467">
    <property type="entry name" value="CTP_transf_like"/>
    <property type="match status" value="1"/>
</dbReference>
<dbReference type="PRINTS" id="PR01020">
    <property type="entry name" value="LPSBIOSNTHSS"/>
</dbReference>
<dbReference type="SUPFAM" id="SSF52374">
    <property type="entry name" value="Nucleotidylyl transferase"/>
    <property type="match status" value="1"/>
</dbReference>
<comment type="function">
    <text evidence="1">Reversibly transfers an adenylyl group from ATP to 4'-phosphopantetheine, yielding dephospho-CoA (dPCoA) and pyrophosphate.</text>
</comment>
<comment type="catalytic activity">
    <reaction evidence="1">
        <text>(R)-4'-phosphopantetheine + ATP + H(+) = 3'-dephospho-CoA + diphosphate</text>
        <dbReference type="Rhea" id="RHEA:19801"/>
        <dbReference type="ChEBI" id="CHEBI:15378"/>
        <dbReference type="ChEBI" id="CHEBI:30616"/>
        <dbReference type="ChEBI" id="CHEBI:33019"/>
        <dbReference type="ChEBI" id="CHEBI:57328"/>
        <dbReference type="ChEBI" id="CHEBI:61723"/>
        <dbReference type="EC" id="2.7.7.3"/>
    </reaction>
</comment>
<comment type="cofactor">
    <cofactor evidence="1">
        <name>Mg(2+)</name>
        <dbReference type="ChEBI" id="CHEBI:18420"/>
    </cofactor>
</comment>
<comment type="pathway">
    <text evidence="1">Cofactor biosynthesis; coenzyme A biosynthesis; CoA from (R)-pantothenate: step 4/5.</text>
</comment>
<comment type="subunit">
    <text evidence="1">Homohexamer.</text>
</comment>
<comment type="subcellular location">
    <subcellularLocation>
        <location evidence="1">Cytoplasm</location>
    </subcellularLocation>
</comment>
<comment type="similarity">
    <text evidence="1">Belongs to the bacterial CoaD family.</text>
</comment>
<name>COAD_STRPG</name>
<reference key="1">
    <citation type="journal article" date="2007" name="J. Bacteriol.">
        <title>Complete genome of acute rheumatic fever-associated serotype M5 Streptococcus pyogenes strain Manfredo.</title>
        <authorList>
            <person name="Holden M.T.G."/>
            <person name="Scott A."/>
            <person name="Cherevach I."/>
            <person name="Chillingworth T."/>
            <person name="Churcher C."/>
            <person name="Cronin A."/>
            <person name="Dowd L."/>
            <person name="Feltwell T."/>
            <person name="Hamlin N."/>
            <person name="Holroyd S."/>
            <person name="Jagels K."/>
            <person name="Moule S."/>
            <person name="Mungall K."/>
            <person name="Quail M.A."/>
            <person name="Price C."/>
            <person name="Rabbinowitsch E."/>
            <person name="Sharp S."/>
            <person name="Skelton J."/>
            <person name="Whitehead S."/>
            <person name="Barrell B.G."/>
            <person name="Kehoe M."/>
            <person name="Parkhill J."/>
        </authorList>
    </citation>
    <scope>NUCLEOTIDE SEQUENCE [LARGE SCALE GENOMIC DNA]</scope>
    <source>
        <strain>Manfredo</strain>
    </source>
</reference>